<name>MURB_ALKEH</name>
<protein>
    <recommendedName>
        <fullName evidence="1">UDP-N-acetylenolpyruvoylglucosamine reductase</fullName>
        <ecNumber evidence="1">1.3.1.98</ecNumber>
    </recommendedName>
    <alternativeName>
        <fullName evidence="1">UDP-N-acetylmuramate dehydrogenase</fullName>
    </alternativeName>
</protein>
<feature type="chain" id="PRO_1000002860" description="UDP-N-acetylenolpyruvoylglucosamine reductase">
    <location>
        <begin position="1"/>
        <end position="298"/>
    </location>
</feature>
<feature type="domain" description="FAD-binding PCMH-type" evidence="1">
    <location>
        <begin position="26"/>
        <end position="190"/>
    </location>
</feature>
<feature type="active site" evidence="1">
    <location>
        <position position="170"/>
    </location>
</feature>
<feature type="active site" description="Proton donor" evidence="1">
    <location>
        <position position="219"/>
    </location>
</feature>
<feature type="active site" evidence="1">
    <location>
        <position position="289"/>
    </location>
</feature>
<reference key="1">
    <citation type="submission" date="2006-08" db="EMBL/GenBank/DDBJ databases">
        <title>Complete sequence of Alkalilimnicola ehrilichei MLHE-1.</title>
        <authorList>
            <person name="Copeland A."/>
            <person name="Lucas S."/>
            <person name="Lapidus A."/>
            <person name="Barry K."/>
            <person name="Detter J.C."/>
            <person name="Glavina del Rio T."/>
            <person name="Hammon N."/>
            <person name="Israni S."/>
            <person name="Dalin E."/>
            <person name="Tice H."/>
            <person name="Pitluck S."/>
            <person name="Sims D."/>
            <person name="Brettin T."/>
            <person name="Bruce D."/>
            <person name="Han C."/>
            <person name="Tapia R."/>
            <person name="Gilna P."/>
            <person name="Schmutz J."/>
            <person name="Larimer F."/>
            <person name="Land M."/>
            <person name="Hauser L."/>
            <person name="Kyrpides N."/>
            <person name="Mikhailova N."/>
            <person name="Oremland R.S."/>
            <person name="Hoeft S.E."/>
            <person name="Switzer-Blum J."/>
            <person name="Kulp T."/>
            <person name="King G."/>
            <person name="Tabita R."/>
            <person name="Witte B."/>
            <person name="Santini J.M."/>
            <person name="Basu P."/>
            <person name="Hollibaugh J.T."/>
            <person name="Xie G."/>
            <person name="Stolz J.F."/>
            <person name="Richardson P."/>
        </authorList>
    </citation>
    <scope>NUCLEOTIDE SEQUENCE [LARGE SCALE GENOMIC DNA]</scope>
    <source>
        <strain>ATCC BAA-1101 / DSM 17681 / MLHE-1</strain>
    </source>
</reference>
<dbReference type="EC" id="1.3.1.98" evidence="1"/>
<dbReference type="EMBL" id="CP000453">
    <property type="protein sequence ID" value="ABI57533.1"/>
    <property type="molecule type" value="Genomic_DNA"/>
</dbReference>
<dbReference type="RefSeq" id="WP_011629927.1">
    <property type="nucleotide sequence ID" value="NC_008340.1"/>
</dbReference>
<dbReference type="SMR" id="Q0A6K4"/>
<dbReference type="KEGG" id="aeh:Mlg_2191"/>
<dbReference type="eggNOG" id="COG0812">
    <property type="taxonomic scope" value="Bacteria"/>
</dbReference>
<dbReference type="HOGENOM" id="CLU_035304_1_1_6"/>
<dbReference type="OrthoDB" id="9804753at2"/>
<dbReference type="UniPathway" id="UPA00219"/>
<dbReference type="Proteomes" id="UP000001962">
    <property type="component" value="Chromosome"/>
</dbReference>
<dbReference type="GO" id="GO:0005829">
    <property type="term" value="C:cytosol"/>
    <property type="evidence" value="ECO:0007669"/>
    <property type="project" value="TreeGrafter"/>
</dbReference>
<dbReference type="GO" id="GO:0071949">
    <property type="term" value="F:FAD binding"/>
    <property type="evidence" value="ECO:0007669"/>
    <property type="project" value="InterPro"/>
</dbReference>
<dbReference type="GO" id="GO:0008762">
    <property type="term" value="F:UDP-N-acetylmuramate dehydrogenase activity"/>
    <property type="evidence" value="ECO:0007669"/>
    <property type="project" value="UniProtKB-UniRule"/>
</dbReference>
<dbReference type="GO" id="GO:0051301">
    <property type="term" value="P:cell division"/>
    <property type="evidence" value="ECO:0007669"/>
    <property type="project" value="UniProtKB-KW"/>
</dbReference>
<dbReference type="GO" id="GO:0071555">
    <property type="term" value="P:cell wall organization"/>
    <property type="evidence" value="ECO:0007669"/>
    <property type="project" value="UniProtKB-KW"/>
</dbReference>
<dbReference type="GO" id="GO:0009252">
    <property type="term" value="P:peptidoglycan biosynthetic process"/>
    <property type="evidence" value="ECO:0007669"/>
    <property type="project" value="UniProtKB-UniRule"/>
</dbReference>
<dbReference type="GO" id="GO:0008360">
    <property type="term" value="P:regulation of cell shape"/>
    <property type="evidence" value="ECO:0007669"/>
    <property type="project" value="UniProtKB-KW"/>
</dbReference>
<dbReference type="Gene3D" id="3.30.465.10">
    <property type="match status" value="1"/>
</dbReference>
<dbReference type="Gene3D" id="3.90.78.10">
    <property type="entry name" value="UDP-N-acetylenolpyruvoylglucosamine reductase, C-terminal domain"/>
    <property type="match status" value="1"/>
</dbReference>
<dbReference type="Gene3D" id="3.30.43.10">
    <property type="entry name" value="Uridine Diphospho-n-acetylenolpyruvylglucosamine Reductase, domain 2"/>
    <property type="match status" value="1"/>
</dbReference>
<dbReference type="HAMAP" id="MF_00037">
    <property type="entry name" value="MurB"/>
    <property type="match status" value="1"/>
</dbReference>
<dbReference type="InterPro" id="IPR016166">
    <property type="entry name" value="FAD-bd_PCMH"/>
</dbReference>
<dbReference type="InterPro" id="IPR036318">
    <property type="entry name" value="FAD-bd_PCMH-like_sf"/>
</dbReference>
<dbReference type="InterPro" id="IPR016167">
    <property type="entry name" value="FAD-bd_PCMH_sub1"/>
</dbReference>
<dbReference type="InterPro" id="IPR016169">
    <property type="entry name" value="FAD-bd_PCMH_sub2"/>
</dbReference>
<dbReference type="InterPro" id="IPR003170">
    <property type="entry name" value="MurB"/>
</dbReference>
<dbReference type="InterPro" id="IPR011601">
    <property type="entry name" value="MurB_C"/>
</dbReference>
<dbReference type="InterPro" id="IPR036635">
    <property type="entry name" value="MurB_C_sf"/>
</dbReference>
<dbReference type="InterPro" id="IPR006094">
    <property type="entry name" value="Oxid_FAD_bind_N"/>
</dbReference>
<dbReference type="NCBIfam" id="TIGR00179">
    <property type="entry name" value="murB"/>
    <property type="match status" value="1"/>
</dbReference>
<dbReference type="NCBIfam" id="NF010480">
    <property type="entry name" value="PRK13905.1"/>
    <property type="match status" value="1"/>
</dbReference>
<dbReference type="PANTHER" id="PTHR21071">
    <property type="entry name" value="UDP-N-ACETYLENOLPYRUVOYLGLUCOSAMINE REDUCTASE"/>
    <property type="match status" value="1"/>
</dbReference>
<dbReference type="PANTHER" id="PTHR21071:SF4">
    <property type="entry name" value="UDP-N-ACETYLENOLPYRUVOYLGLUCOSAMINE REDUCTASE"/>
    <property type="match status" value="1"/>
</dbReference>
<dbReference type="Pfam" id="PF01565">
    <property type="entry name" value="FAD_binding_4"/>
    <property type="match status" value="1"/>
</dbReference>
<dbReference type="Pfam" id="PF02873">
    <property type="entry name" value="MurB_C"/>
    <property type="match status" value="1"/>
</dbReference>
<dbReference type="SUPFAM" id="SSF56176">
    <property type="entry name" value="FAD-binding/transporter-associated domain-like"/>
    <property type="match status" value="1"/>
</dbReference>
<dbReference type="SUPFAM" id="SSF56194">
    <property type="entry name" value="Uridine diphospho-N-Acetylenolpyruvylglucosamine reductase, MurB, C-terminal domain"/>
    <property type="match status" value="1"/>
</dbReference>
<dbReference type="PROSITE" id="PS51387">
    <property type="entry name" value="FAD_PCMH"/>
    <property type="match status" value="1"/>
</dbReference>
<evidence type="ECO:0000255" key="1">
    <source>
        <dbReference type="HAMAP-Rule" id="MF_00037"/>
    </source>
</evidence>
<proteinExistence type="inferred from homology"/>
<gene>
    <name evidence="1" type="primary">murB</name>
    <name type="ordered locus">Mlg_2191</name>
</gene>
<sequence length="298" mass="32214">MMAAERRIQPGELRHWEPMARYTSWRAGGPAERLYRPAGLADLVAFLRRLPEDEPLFWCGLGSNLLVREGGLRGTVILTQGGLDALRVEGEQVHAEAGVACGRLSRYCIRQGLAGAEFFAGIPGTLGGALAMNAGAFGGETWSRVRRVETVDRHGVLRRRGPEDFRVGYRHVSGPAGEWFVAAVLDLEPGDAQAMQARVKALLSQRNRTQPIGEPSCGSVFRNPPGDHAARLIEAAGLKGLRRGAAQVSERHANFIINTGGATPADIEALIEQVRDEVARRHGVTLVPEVHIVGEAQS</sequence>
<keyword id="KW-0131">Cell cycle</keyword>
<keyword id="KW-0132">Cell division</keyword>
<keyword id="KW-0133">Cell shape</keyword>
<keyword id="KW-0961">Cell wall biogenesis/degradation</keyword>
<keyword id="KW-0963">Cytoplasm</keyword>
<keyword id="KW-0274">FAD</keyword>
<keyword id="KW-0285">Flavoprotein</keyword>
<keyword id="KW-0521">NADP</keyword>
<keyword id="KW-0560">Oxidoreductase</keyword>
<keyword id="KW-0573">Peptidoglycan synthesis</keyword>
<keyword id="KW-1185">Reference proteome</keyword>
<comment type="function">
    <text evidence="1">Cell wall formation.</text>
</comment>
<comment type="catalytic activity">
    <reaction evidence="1">
        <text>UDP-N-acetyl-alpha-D-muramate + NADP(+) = UDP-N-acetyl-3-O-(1-carboxyvinyl)-alpha-D-glucosamine + NADPH + H(+)</text>
        <dbReference type="Rhea" id="RHEA:12248"/>
        <dbReference type="ChEBI" id="CHEBI:15378"/>
        <dbReference type="ChEBI" id="CHEBI:57783"/>
        <dbReference type="ChEBI" id="CHEBI:58349"/>
        <dbReference type="ChEBI" id="CHEBI:68483"/>
        <dbReference type="ChEBI" id="CHEBI:70757"/>
        <dbReference type="EC" id="1.3.1.98"/>
    </reaction>
</comment>
<comment type="cofactor">
    <cofactor evidence="1">
        <name>FAD</name>
        <dbReference type="ChEBI" id="CHEBI:57692"/>
    </cofactor>
</comment>
<comment type="pathway">
    <text evidence="1">Cell wall biogenesis; peptidoglycan biosynthesis.</text>
</comment>
<comment type="subcellular location">
    <subcellularLocation>
        <location evidence="1">Cytoplasm</location>
    </subcellularLocation>
</comment>
<comment type="similarity">
    <text evidence="1">Belongs to the MurB family.</text>
</comment>
<accession>Q0A6K4</accession>
<organism>
    <name type="scientific">Alkalilimnicola ehrlichii (strain ATCC BAA-1101 / DSM 17681 / MLHE-1)</name>
    <dbReference type="NCBI Taxonomy" id="187272"/>
    <lineage>
        <taxon>Bacteria</taxon>
        <taxon>Pseudomonadati</taxon>
        <taxon>Pseudomonadota</taxon>
        <taxon>Gammaproteobacteria</taxon>
        <taxon>Chromatiales</taxon>
        <taxon>Ectothiorhodospiraceae</taxon>
        <taxon>Alkalilimnicola</taxon>
    </lineage>
</organism>